<keyword id="KW-0963">Cytoplasm</keyword>
<keyword id="KW-0325">Glycoprotein</keyword>
<keyword id="KW-0433">Leucine-rich repeat</keyword>
<keyword id="KW-0472">Membrane</keyword>
<keyword id="KW-0597">Phosphoprotein</keyword>
<keyword id="KW-1267">Proteomics identification</keyword>
<keyword id="KW-1185">Reference proteome</keyword>
<keyword id="KW-0677">Repeat</keyword>
<keyword id="KW-0732">Signal</keyword>
<keyword id="KW-0812">Transmembrane</keyword>
<keyword id="KW-1133">Transmembrane helix</keyword>
<protein>
    <recommendedName>
        <fullName>Leucine-rich repeat-containing protein 25</fullName>
    </recommendedName>
    <alternativeName>
        <fullName>Monocyte and plasmacytoid-activated protein</fullName>
    </alternativeName>
</protein>
<organism>
    <name type="scientific">Homo sapiens</name>
    <name type="common">Human</name>
    <dbReference type="NCBI Taxonomy" id="9606"/>
    <lineage>
        <taxon>Eukaryota</taxon>
        <taxon>Metazoa</taxon>
        <taxon>Chordata</taxon>
        <taxon>Craniata</taxon>
        <taxon>Vertebrata</taxon>
        <taxon>Euteleostomi</taxon>
        <taxon>Mammalia</taxon>
        <taxon>Eutheria</taxon>
        <taxon>Euarchontoglires</taxon>
        <taxon>Primates</taxon>
        <taxon>Haplorrhini</taxon>
        <taxon>Catarrhini</taxon>
        <taxon>Hominidae</taxon>
        <taxon>Homo</taxon>
    </lineage>
</organism>
<feature type="signal peptide" evidence="2">
    <location>
        <begin position="1"/>
        <end position="20"/>
    </location>
</feature>
<feature type="chain" id="PRO_0000021613" description="Leucine-rich repeat-containing protein 25">
    <location>
        <begin position="21"/>
        <end position="305"/>
    </location>
</feature>
<feature type="topological domain" description="Extracellular" evidence="2">
    <location>
        <begin position="21"/>
        <end position="165"/>
    </location>
</feature>
<feature type="transmembrane region" description="Helical" evidence="2">
    <location>
        <begin position="166"/>
        <end position="186"/>
    </location>
</feature>
<feature type="topological domain" description="Cytoplasmic" evidence="2">
    <location>
        <begin position="187"/>
        <end position="305"/>
    </location>
</feature>
<feature type="repeat" description="LRR 1">
    <location>
        <begin position="39"/>
        <end position="59"/>
    </location>
</feature>
<feature type="repeat" description="LRR 2">
    <location>
        <begin position="62"/>
        <end position="83"/>
    </location>
</feature>
<feature type="repeat" description="LRR 3">
    <location>
        <begin position="86"/>
        <end position="107"/>
    </location>
</feature>
<feature type="region of interest" description="Disordered" evidence="3">
    <location>
        <begin position="204"/>
        <end position="229"/>
    </location>
</feature>
<feature type="modified residue" description="Phosphotyrosine" evidence="1">
    <location>
        <position position="284"/>
    </location>
</feature>
<feature type="glycosylation site" description="N-linked (GlcNAc...) asparagine" evidence="2">
    <location>
        <position position="44"/>
    </location>
</feature>
<feature type="glycosylation site" description="N-linked (GlcNAc...) asparagine" evidence="2">
    <location>
        <position position="55"/>
    </location>
</feature>
<feature type="glycosylation site" description="N-linked (GlcNAc...) asparagine" evidence="2">
    <location>
        <position position="130"/>
    </location>
</feature>
<feature type="glycosylation site" description="N-linked (GlcNAc...) asparagine" evidence="2">
    <location>
        <position position="148"/>
    </location>
</feature>
<feature type="sequence variant" id="VAR_061677" description="In dbSNP:rs34439430.">
    <original>P</original>
    <variation>T</variation>
    <location>
        <position position="234"/>
    </location>
</feature>
<feature type="sequence variant" id="VAR_051109" description="In dbSNP:rs6512265." evidence="4 5">
    <original>P</original>
    <variation>S</variation>
    <location>
        <position position="294"/>
    </location>
</feature>
<feature type="sequence conflict" description="In Ref. 3; BAC04548." evidence="8" ref="3">
    <original>A</original>
    <variation>V</variation>
    <location>
        <position position="40"/>
    </location>
</feature>
<feature type="sequence conflict" description="In Ref. 1; CAD19531." evidence="8" ref="1">
    <original>A</original>
    <variation>G</variation>
    <location>
        <position position="82"/>
    </location>
</feature>
<feature type="sequence conflict" description="In Ref. 3; BAC04548." evidence="8" ref="3">
    <original>N</original>
    <variation>S</variation>
    <location>
        <position position="95"/>
    </location>
</feature>
<dbReference type="EMBL" id="AJ422148">
    <property type="protein sequence ID" value="CAD19531.1"/>
    <property type="molecule type" value="mRNA"/>
</dbReference>
<dbReference type="EMBL" id="AY358151">
    <property type="protein sequence ID" value="AAQ88518.1"/>
    <property type="molecule type" value="mRNA"/>
</dbReference>
<dbReference type="EMBL" id="AK095435">
    <property type="protein sequence ID" value="BAC04548.1"/>
    <property type="molecule type" value="mRNA"/>
</dbReference>
<dbReference type="EMBL" id="BC071640">
    <property type="protein sequence ID" value="AAH71640.1"/>
    <property type="molecule type" value="mRNA"/>
</dbReference>
<dbReference type="EMBL" id="BC093842">
    <property type="protein sequence ID" value="AAH93842.1"/>
    <property type="molecule type" value="mRNA"/>
</dbReference>
<dbReference type="CCDS" id="CCDS12377.1"/>
<dbReference type="RefSeq" id="NP_660299.2">
    <property type="nucleotide sequence ID" value="NM_145256.2"/>
</dbReference>
<dbReference type="RefSeq" id="XP_005259796.1">
    <property type="nucleotide sequence ID" value="XM_005259739.5"/>
</dbReference>
<dbReference type="BioGRID" id="125983">
    <property type="interactions" value="216"/>
</dbReference>
<dbReference type="FunCoup" id="Q8N386">
    <property type="interactions" value="83"/>
</dbReference>
<dbReference type="IntAct" id="Q8N386">
    <property type="interactions" value="180"/>
</dbReference>
<dbReference type="STRING" id="9606.ENSP00000340983"/>
<dbReference type="GlyCosmos" id="Q8N386">
    <property type="glycosylation" value="4 sites, No reported glycans"/>
</dbReference>
<dbReference type="GlyGen" id="Q8N386">
    <property type="glycosylation" value="4 sites"/>
</dbReference>
<dbReference type="PhosphoSitePlus" id="Q8N386"/>
<dbReference type="SwissPalm" id="Q8N386"/>
<dbReference type="BioMuta" id="LRRC25"/>
<dbReference type="DMDM" id="47605902"/>
<dbReference type="jPOST" id="Q8N386"/>
<dbReference type="MassIVE" id="Q8N386"/>
<dbReference type="PaxDb" id="9606-ENSP00000340983"/>
<dbReference type="PeptideAtlas" id="Q8N386"/>
<dbReference type="ProteomicsDB" id="71776"/>
<dbReference type="Antibodypedia" id="28033">
    <property type="antibodies" value="352 antibodies from 18 providers"/>
</dbReference>
<dbReference type="DNASU" id="126364"/>
<dbReference type="Ensembl" id="ENST00000339007.4">
    <property type="protein sequence ID" value="ENSP00000340983.2"/>
    <property type="gene ID" value="ENSG00000175489.10"/>
</dbReference>
<dbReference type="Ensembl" id="ENST00000595840.1">
    <property type="protein sequence ID" value="ENSP00000472290.1"/>
    <property type="gene ID" value="ENSG00000175489.10"/>
</dbReference>
<dbReference type="GeneID" id="126364"/>
<dbReference type="KEGG" id="hsa:126364"/>
<dbReference type="MANE-Select" id="ENST00000339007.4">
    <property type="protein sequence ID" value="ENSP00000340983.2"/>
    <property type="RefSeq nucleotide sequence ID" value="NM_145256.3"/>
    <property type="RefSeq protein sequence ID" value="NP_660299.2"/>
</dbReference>
<dbReference type="UCSC" id="uc002niw.4">
    <property type="organism name" value="human"/>
</dbReference>
<dbReference type="AGR" id="HGNC:29806"/>
<dbReference type="CTD" id="126364"/>
<dbReference type="DisGeNET" id="126364"/>
<dbReference type="GeneCards" id="LRRC25"/>
<dbReference type="HGNC" id="HGNC:29806">
    <property type="gene designation" value="LRRC25"/>
</dbReference>
<dbReference type="HPA" id="ENSG00000175489">
    <property type="expression patterns" value="Group enriched (bone marrow, lymphoid tissue)"/>
</dbReference>
<dbReference type="MIM" id="607518">
    <property type="type" value="gene"/>
</dbReference>
<dbReference type="neXtProt" id="NX_Q8N386"/>
<dbReference type="OpenTargets" id="ENSG00000175489"/>
<dbReference type="PharmGKB" id="PA134957834"/>
<dbReference type="VEuPathDB" id="HostDB:ENSG00000175489"/>
<dbReference type="eggNOG" id="ENOG502S9V5">
    <property type="taxonomic scope" value="Eukaryota"/>
</dbReference>
<dbReference type="GeneTree" id="ENSGT00390000004001"/>
<dbReference type="HOGENOM" id="CLU_906014_0_0_1"/>
<dbReference type="InParanoid" id="Q8N386"/>
<dbReference type="OMA" id="WHNVSAF"/>
<dbReference type="OrthoDB" id="9835318at2759"/>
<dbReference type="PAN-GO" id="Q8N386">
    <property type="GO annotations" value="0 GO annotations based on evolutionary models"/>
</dbReference>
<dbReference type="PhylomeDB" id="Q8N386"/>
<dbReference type="TreeFam" id="TF337414"/>
<dbReference type="PathwayCommons" id="Q8N386"/>
<dbReference type="SignaLink" id="Q8N386"/>
<dbReference type="BioGRID-ORCS" id="126364">
    <property type="hits" value="16 hits in 1153 CRISPR screens"/>
</dbReference>
<dbReference type="ChiTaRS" id="LRRC25">
    <property type="organism name" value="human"/>
</dbReference>
<dbReference type="GenomeRNAi" id="126364"/>
<dbReference type="Pharos" id="Q8N386">
    <property type="development level" value="Tbio"/>
</dbReference>
<dbReference type="PRO" id="PR:Q8N386"/>
<dbReference type="Proteomes" id="UP000005640">
    <property type="component" value="Chromosome 19"/>
</dbReference>
<dbReference type="RNAct" id="Q8N386">
    <property type="molecule type" value="protein"/>
</dbReference>
<dbReference type="Bgee" id="ENSG00000175489">
    <property type="expression patterns" value="Expressed in monocyte and 103 other cell types or tissues"/>
</dbReference>
<dbReference type="GO" id="GO:0005829">
    <property type="term" value="C:cytosol"/>
    <property type="evidence" value="ECO:0000314"/>
    <property type="project" value="HPA"/>
</dbReference>
<dbReference type="GO" id="GO:0005783">
    <property type="term" value="C:endoplasmic reticulum"/>
    <property type="evidence" value="ECO:0000314"/>
    <property type="project" value="HPA"/>
</dbReference>
<dbReference type="GO" id="GO:0016020">
    <property type="term" value="C:membrane"/>
    <property type="evidence" value="ECO:0007669"/>
    <property type="project" value="UniProtKB-SubCell"/>
</dbReference>
<dbReference type="GO" id="GO:0015630">
    <property type="term" value="C:microtubule cytoskeleton"/>
    <property type="evidence" value="ECO:0000314"/>
    <property type="project" value="HPA"/>
</dbReference>
<dbReference type="Gene3D" id="3.80.10.10">
    <property type="entry name" value="Ribonuclease Inhibitor"/>
    <property type="match status" value="1"/>
</dbReference>
<dbReference type="InterPro" id="IPR032675">
    <property type="entry name" value="LRR_dom_sf"/>
</dbReference>
<dbReference type="InterPro" id="IPR039243">
    <property type="entry name" value="LRRC25"/>
</dbReference>
<dbReference type="PANTHER" id="PTHR20878">
    <property type="entry name" value="LEUCINE-RICH REPEAT CONTAINING PROTEIN 25"/>
    <property type="match status" value="1"/>
</dbReference>
<dbReference type="PANTHER" id="PTHR20878:SF0">
    <property type="entry name" value="LEUCINE-RICH REPEAT-CONTAINING PROTEIN 25"/>
    <property type="match status" value="1"/>
</dbReference>
<dbReference type="SUPFAM" id="SSF52058">
    <property type="entry name" value="L domain-like"/>
    <property type="match status" value="1"/>
</dbReference>
<evidence type="ECO:0000250" key="1">
    <source>
        <dbReference type="UniProtKB" id="Q8K1T1"/>
    </source>
</evidence>
<evidence type="ECO:0000255" key="2"/>
<evidence type="ECO:0000256" key="3">
    <source>
        <dbReference type="SAM" id="MobiDB-lite"/>
    </source>
</evidence>
<evidence type="ECO:0000269" key="4">
    <source>
    </source>
</evidence>
<evidence type="ECO:0000269" key="5">
    <source>
    </source>
</evidence>
<evidence type="ECO:0000269" key="6">
    <source>
    </source>
</evidence>
<evidence type="ECO:0000269" key="7">
    <source>
    </source>
</evidence>
<evidence type="ECO:0000305" key="8"/>
<comment type="function">
    <text evidence="4 6 7">Plays a role in the inhibition of RLR-mediated type I interferon signaling pathway by targeting RIGI for autophagic degradation. Interacts specifically with ISG15-associated RIGI to promote interaction between RIGI and the autophagic cargo receptor p62/SQSTM1 to mediate RIGI degradation via selective autophagy (PubMed:29288164). Also plays a role in the inhibition of NF-kappa-B signaling pathway and inflammatory response by promoting the degradation of p65/RELA.</text>
</comment>
<comment type="subunit">
    <text evidence="6 7">Interacts with RIGI (PubMed:29288164). Interacts with SQSTM1 (PubMed:29288164). Interacts with p65/RELA; this interaction promotes the degradation of RELA through autophagy (PubMed:29044191).</text>
</comment>
<comment type="interaction">
    <interactant intactId="EBI-11304917">
        <id>Q8N386</id>
    </interactant>
    <interactant intactId="EBI-717666">
        <id>Q96AP0</id>
        <label>ACD</label>
    </interactant>
    <organismsDiffer>false</organismsDiffer>
    <experiments>2</experiments>
</comment>
<comment type="interaction">
    <interactant intactId="EBI-11304917">
        <id>Q8N386</id>
    </interactant>
    <interactant intactId="EBI-1754287">
        <id>Q9NRZ5</id>
        <label>AGPAT4</label>
    </interactant>
    <organismsDiffer>false</organismsDiffer>
    <experiments>3</experiments>
</comment>
<comment type="interaction">
    <interactant intactId="EBI-11304917">
        <id>Q8N386</id>
    </interactant>
    <interactant intactId="EBI-12109402">
        <id>Q86W74-2</id>
        <label>ANKRD46</label>
    </interactant>
    <organismsDiffer>false</organismsDiffer>
    <experiments>3</experiments>
</comment>
<comment type="interaction">
    <interactant intactId="EBI-11304917">
        <id>Q8N386</id>
    </interactant>
    <interactant intactId="EBI-11976321">
        <id>O95236-2</id>
        <label>APOL3</label>
    </interactant>
    <organismsDiffer>false</organismsDiffer>
    <experiments>3</experiments>
</comment>
<comment type="interaction">
    <interactant intactId="EBI-11304917">
        <id>Q8N386</id>
    </interactant>
    <interactant intactId="EBI-721179">
        <id>P27449</id>
        <label>ATP6V0C</label>
    </interactant>
    <organismsDiffer>false</organismsDiffer>
    <experiments>3</experiments>
</comment>
<comment type="interaction">
    <interactant intactId="EBI-11304917">
        <id>Q8N386</id>
    </interactant>
    <interactant intactId="EBI-3922513">
        <id>O95393</id>
        <label>BMP10</label>
    </interactant>
    <organismsDiffer>false</organismsDiffer>
    <experiments>3</experiments>
</comment>
<comment type="interaction">
    <interactant intactId="EBI-11304917">
        <id>Q8N386</id>
    </interactant>
    <interactant intactId="EBI-12244618">
        <id>Q6PL45-2</id>
        <label>BRICD5</label>
    </interactant>
    <organismsDiffer>false</organismsDiffer>
    <experiments>3</experiments>
</comment>
<comment type="interaction">
    <interactant intactId="EBI-11304917">
        <id>Q8N386</id>
    </interactant>
    <interactant intactId="EBI-307924">
        <id>P21854</id>
        <label>CD72</label>
    </interactant>
    <organismsDiffer>false</organismsDiffer>
    <experiments>3</experiments>
</comment>
<comment type="interaction">
    <interactant intactId="EBI-11304917">
        <id>Q8N386</id>
    </interactant>
    <interactant intactId="EBI-12256978">
        <id>Q8N6F1-2</id>
        <label>CLDN19</label>
    </interactant>
    <organismsDiffer>false</organismsDiffer>
    <experiments>3</experiments>
</comment>
<comment type="interaction">
    <interactant intactId="EBI-11304917">
        <id>Q8N386</id>
    </interactant>
    <interactant intactId="EBI-11996768">
        <id>Q8NC01</id>
        <label>CLEC1A</label>
    </interactant>
    <organismsDiffer>false</organismsDiffer>
    <experiments>3</experiments>
</comment>
<comment type="interaction">
    <interactant intactId="EBI-11304917">
        <id>Q8N386</id>
    </interactant>
    <interactant intactId="EBI-6165897">
        <id>Q9NWW5</id>
        <label>CLN6</label>
    </interactant>
    <organismsDiffer>false</organismsDiffer>
    <experiments>3</experiments>
</comment>
<comment type="interaction">
    <interactant intactId="EBI-11304917">
        <id>Q8N386</id>
    </interactant>
    <interactant intactId="EBI-12813623">
        <id>A0PK11</id>
        <label>CLRN2</label>
    </interactant>
    <organismsDiffer>false</organismsDiffer>
    <experiments>3</experiments>
</comment>
<comment type="interaction">
    <interactant intactId="EBI-11304917">
        <id>Q8N386</id>
    </interactant>
    <interactant intactId="EBI-12208021">
        <id>Q8TBE1</id>
        <label>CNIH3</label>
    </interactant>
    <organismsDiffer>false</organismsDiffer>
    <experiments>3</experiments>
</comment>
<comment type="interaction">
    <interactant intactId="EBI-11304917">
        <id>Q8N386</id>
    </interactant>
    <interactant intactId="EBI-3911467">
        <id>Q07325</id>
        <label>CXCL9</label>
    </interactant>
    <organismsDiffer>false</organismsDiffer>
    <experiments>3</experiments>
</comment>
<comment type="interaction">
    <interactant intactId="EBI-11304917">
        <id>Q8N386</id>
    </interactant>
    <interactant intactId="EBI-10244198">
        <id>Q5J5C9</id>
        <label>DEFB121</label>
    </interactant>
    <organismsDiffer>false</organismsDiffer>
    <experiments>3</experiments>
</comment>
<comment type="interaction">
    <interactant intactId="EBI-11304917">
        <id>Q8N386</id>
    </interactant>
    <interactant intactId="EBI-8639143">
        <id>Q96LL9</id>
        <label>DNAJC30</label>
    </interactant>
    <organismsDiffer>false</organismsDiffer>
    <experiments>3</experiments>
</comment>
<comment type="interaction">
    <interactant intactId="EBI-11304917">
        <id>Q8N386</id>
    </interactant>
    <interactant intactId="EBI-10215665">
        <id>P56851</id>
        <label>EDDM3B</label>
    </interactant>
    <organismsDiffer>false</organismsDiffer>
    <experiments>3</experiments>
</comment>
<comment type="interaction">
    <interactant intactId="EBI-11304917">
        <id>Q8N386</id>
    </interactant>
    <interactant intactId="EBI-2876774">
        <id>Q92520</id>
        <label>FAM3C</label>
    </interactant>
    <organismsDiffer>false</organismsDiffer>
    <experiments>3</experiments>
</comment>
<comment type="interaction">
    <interactant intactId="EBI-11304917">
        <id>Q8N386</id>
    </interactant>
    <interactant intactId="EBI-743099">
        <id>Q969F0</id>
        <label>FATE1</label>
    </interactant>
    <organismsDiffer>false</organismsDiffer>
    <experiments>3</experiments>
</comment>
<comment type="interaction">
    <interactant intactId="EBI-11304917">
        <id>Q8N386</id>
    </interactant>
    <interactant intactId="EBI-17291771">
        <id>P25090</id>
        <label>FPR2</label>
    </interactant>
    <organismsDiffer>false</organismsDiffer>
    <experiments>3</experiments>
</comment>
<comment type="interaction">
    <interactant intactId="EBI-11304917">
        <id>Q8N386</id>
    </interactant>
    <interactant intactId="EBI-13067820">
        <id>Q9NZD1</id>
        <label>GPRC5D</label>
    </interactant>
    <organismsDiffer>false</organismsDiffer>
    <experiments>3</experiments>
</comment>
<comment type="interaction">
    <interactant intactId="EBI-11304917">
        <id>Q8N386</id>
    </interactant>
    <interactant intactId="EBI-2820517">
        <id>Q8TAF8</id>
        <label>LHFPL5</label>
    </interactant>
    <organismsDiffer>false</organismsDiffer>
    <experiments>3</experiments>
</comment>
<comment type="interaction">
    <interactant intactId="EBI-11304917">
        <id>Q8N386</id>
    </interactant>
    <interactant intactId="EBI-3932027">
        <id>P21145</id>
        <label>MAL</label>
    </interactant>
    <organismsDiffer>false</organismsDiffer>
    <experiments>3</experiments>
</comment>
<comment type="interaction">
    <interactant intactId="EBI-11304917">
        <id>Q8N386</id>
    </interactant>
    <interactant intactId="EBI-12807478">
        <id>P35372-10</id>
        <label>OPRM1</label>
    </interactant>
    <organismsDiffer>false</organismsDiffer>
    <experiments>3</experiments>
</comment>
<comment type="interaction">
    <interactant intactId="EBI-11304917">
        <id>Q8N386</id>
    </interactant>
    <interactant intactId="EBI-12257782">
        <id>Q99640-2</id>
        <label>PKMYT1</label>
    </interactant>
    <organismsDiffer>false</organismsDiffer>
    <experiments>3</experiments>
</comment>
<comment type="interaction">
    <interactant intactId="EBI-11304917">
        <id>Q8N386</id>
    </interactant>
    <interactant intactId="EBI-8652812">
        <id>P54315</id>
        <label>PNLIPRP1</label>
    </interactant>
    <organismsDiffer>false</organismsDiffer>
    <experiments>3</experiments>
</comment>
<comment type="interaction">
    <interactant intactId="EBI-11304917">
        <id>Q8N386</id>
    </interactant>
    <interactant intactId="EBI-8652744">
        <id>Q96IW7</id>
        <label>SEC22A</label>
    </interactant>
    <organismsDiffer>false</organismsDiffer>
    <experiments>3</experiments>
</comment>
<comment type="interaction">
    <interactant intactId="EBI-11304917">
        <id>Q8N386</id>
    </interactant>
    <interactant intactId="EBI-4402709">
        <id>P60059</id>
        <label>SEC61G</label>
    </interactant>
    <organismsDiffer>false</organismsDiffer>
    <experiments>3</experiments>
</comment>
<comment type="interaction">
    <interactant intactId="EBI-11304917">
        <id>Q8N386</id>
    </interactant>
    <interactant intactId="EBI-8640191">
        <id>Q9NRQ5</id>
        <label>SMCO4</label>
    </interactant>
    <organismsDiffer>false</organismsDiffer>
    <experiments>3</experiments>
</comment>
<comment type="interaction">
    <interactant intactId="EBI-11304917">
        <id>Q8N386</id>
    </interactant>
    <interactant intactId="EBI-17848320">
        <id>Q6ZMD2-2</id>
        <label>SPNS3</label>
    </interactant>
    <organismsDiffer>false</organismsDiffer>
    <experiments>3</experiments>
</comment>
<comment type="interaction">
    <interactant intactId="EBI-11304917">
        <id>Q8N386</id>
    </interactant>
    <interactant intactId="EBI-727322">
        <id>Q9BXJ8</id>
        <label>TMEM120A</label>
    </interactant>
    <organismsDiffer>false</organismsDiffer>
    <experiments>3</experiments>
</comment>
<comment type="interaction">
    <interactant intactId="EBI-11304917">
        <id>Q8N386</id>
    </interactant>
    <interactant intactId="EBI-11994282">
        <id>Q5SNT2-2</id>
        <label>TMEM201</label>
    </interactant>
    <organismsDiffer>false</organismsDiffer>
    <experiments>3</experiments>
</comment>
<comment type="interaction">
    <interactant intactId="EBI-11304917">
        <id>Q8N386</id>
    </interactant>
    <interactant intactId="EBI-359977">
        <id>P01375</id>
        <label>TNF</label>
    </interactant>
    <organismsDiffer>false</organismsDiffer>
    <experiments>3</experiments>
</comment>
<comment type="interaction">
    <interactant intactId="EBI-11304917">
        <id>Q8N386</id>
    </interactant>
    <interactant intactId="EBI-765817">
        <id>Q9Y228</id>
        <label>TRAF3IP3</label>
    </interactant>
    <organismsDiffer>false</organismsDiffer>
    <experiments>3</experiments>
</comment>
<comment type="interaction">
    <interactant intactId="EBI-11304917">
        <id>Q8N386</id>
    </interactant>
    <interactant intactId="EBI-8652667">
        <id>O14817</id>
        <label>TSPAN4</label>
    </interactant>
    <organismsDiffer>false</organismsDiffer>
    <experiments>3</experiments>
</comment>
<comment type="interaction">
    <interactant intactId="EBI-11304917">
        <id>Q8N386</id>
    </interactant>
    <interactant intactId="EBI-10243654">
        <id>Q5BVD1</id>
        <label>TTMP</label>
    </interactant>
    <organismsDiffer>false</organismsDiffer>
    <experiments>3</experiments>
</comment>
<comment type="interaction">
    <interactant intactId="EBI-11304917">
        <id>Q8N386</id>
    </interactant>
    <interactant intactId="EBI-10191195">
        <id>O95183</id>
        <label>VAMP5</label>
    </interactant>
    <organismsDiffer>false</organismsDiffer>
    <experiments>3</experiments>
</comment>
<comment type="interaction">
    <interactant intactId="EBI-11304917">
        <id>Q8N386</id>
    </interactant>
    <interactant intactId="EBI-751210">
        <id>Q96EC8</id>
        <label>YIPF6</label>
    </interactant>
    <organismsDiffer>false</organismsDiffer>
    <experiments>3</experiments>
</comment>
<comment type="subcellular location">
    <subcellularLocation>
        <location evidence="8">Membrane</location>
        <topology evidence="8">Single-pass type I membrane protein</topology>
    </subcellularLocation>
    <subcellularLocation>
        <location evidence="6">Cytoplasm</location>
    </subcellularLocation>
</comment>
<comment type="tissue specificity">
    <text evidence="4">Expressed in plasmacytoid dendritic cells (PDC), monocyte-derived dendritic cells (MDDC), granulocytes, monocytes, B-lymphocytes, peripheral blood leukocytes, spleen, bone marrow, and, to a lesser extent, lymph nodes, fetal liver, and appendix but not in thymus.</text>
</comment>
<comment type="induction">
    <text evidence="4">Down-regulated in CD40-activated monocyte-derived dendritic cells.</text>
</comment>
<sequence length="305" mass="33179">MGGTLAWTLLLPLLLRESDSLEPSCTVSSADVDWNAEFSATCLNFSGLSLSLPHNQSLRASNVILLDLSGNGLRELPVTFFAHLQKLEVLNVLRNPLSRVDGALAARCDLDLQADCNCALESWHDIRRDNCSGQKPLLCWDTTSSQHNLSAFLEVSCAPGLASATIGAVVVSGCLLLGLAIAGPVLAWRLWRCRVARSRELNKPWAAQDGPKPGLGLQPRYGSRSAPKPQVAVPSCPSTPDYENMFVGQPAAEHQWDEQGAHPSEDNDFYINYKDIDLASQPVYCNLQSLGQAPMDEEEYVIPGH</sequence>
<accession>Q8N386</accession>
<accession>Q6IQ00</accession>
<accession>Q8N9A5</accession>
<reference key="1">
    <citation type="journal article" date="2002" name="Blood">
        <title>Subtractive hybridization reveals the expression of immunoglobulin like transcript 7, Eph-B1, granzyme B, and 3 novel transcripts in human plasmacytoid dendritic cells.</title>
        <authorList>
            <person name="Rissoan M.-C."/>
            <person name="Duhen T."/>
            <person name="Bridon J.-M."/>
            <person name="Bendriss-Vermare N."/>
            <person name="Peronne C."/>
            <person name="de Saint-Vis B.M."/>
            <person name="Briere F."/>
            <person name="Bates E.E.M."/>
        </authorList>
    </citation>
    <scope>NUCLEOTIDE SEQUENCE [MRNA]</scope>
    <scope>FUNCTION</scope>
    <scope>TISSUE SPECIFICITY</scope>
    <scope>INDUCTION</scope>
    <scope>VARIANT SER-294</scope>
    <source>
        <tissue>Plasmacytoid dendritic cell</tissue>
    </source>
</reference>
<reference key="2">
    <citation type="journal article" date="2003" name="Genome Res.">
        <title>The secreted protein discovery initiative (SPDI), a large-scale effort to identify novel human secreted and transmembrane proteins: a bioinformatics assessment.</title>
        <authorList>
            <person name="Clark H.F."/>
            <person name="Gurney A.L."/>
            <person name="Abaya E."/>
            <person name="Baker K."/>
            <person name="Baldwin D.T."/>
            <person name="Brush J."/>
            <person name="Chen J."/>
            <person name="Chow B."/>
            <person name="Chui C."/>
            <person name="Crowley C."/>
            <person name="Currell B."/>
            <person name="Deuel B."/>
            <person name="Dowd P."/>
            <person name="Eaton D."/>
            <person name="Foster J.S."/>
            <person name="Grimaldi C."/>
            <person name="Gu Q."/>
            <person name="Hass P.E."/>
            <person name="Heldens S."/>
            <person name="Huang A."/>
            <person name="Kim H.S."/>
            <person name="Klimowski L."/>
            <person name="Jin Y."/>
            <person name="Johnson S."/>
            <person name="Lee J."/>
            <person name="Lewis L."/>
            <person name="Liao D."/>
            <person name="Mark M.R."/>
            <person name="Robbie E."/>
            <person name="Sanchez C."/>
            <person name="Schoenfeld J."/>
            <person name="Seshagiri S."/>
            <person name="Simmons L."/>
            <person name="Singh J."/>
            <person name="Smith V."/>
            <person name="Stinson J."/>
            <person name="Vagts A."/>
            <person name="Vandlen R.L."/>
            <person name="Watanabe C."/>
            <person name="Wieand D."/>
            <person name="Woods K."/>
            <person name="Xie M.-H."/>
            <person name="Yansura D.G."/>
            <person name="Yi S."/>
            <person name="Yu G."/>
            <person name="Yuan J."/>
            <person name="Zhang M."/>
            <person name="Zhang Z."/>
            <person name="Goddard A.D."/>
            <person name="Wood W.I."/>
            <person name="Godowski P.J."/>
            <person name="Gray A.M."/>
        </authorList>
    </citation>
    <scope>NUCLEOTIDE SEQUENCE [LARGE SCALE MRNA]</scope>
</reference>
<reference key="3">
    <citation type="journal article" date="2004" name="Nat. Genet.">
        <title>Complete sequencing and characterization of 21,243 full-length human cDNAs.</title>
        <authorList>
            <person name="Ota T."/>
            <person name="Suzuki Y."/>
            <person name="Nishikawa T."/>
            <person name="Otsuki T."/>
            <person name="Sugiyama T."/>
            <person name="Irie R."/>
            <person name="Wakamatsu A."/>
            <person name="Hayashi K."/>
            <person name="Sato H."/>
            <person name="Nagai K."/>
            <person name="Kimura K."/>
            <person name="Makita H."/>
            <person name="Sekine M."/>
            <person name="Obayashi M."/>
            <person name="Nishi T."/>
            <person name="Shibahara T."/>
            <person name="Tanaka T."/>
            <person name="Ishii S."/>
            <person name="Yamamoto J."/>
            <person name="Saito K."/>
            <person name="Kawai Y."/>
            <person name="Isono Y."/>
            <person name="Nakamura Y."/>
            <person name="Nagahari K."/>
            <person name="Murakami K."/>
            <person name="Yasuda T."/>
            <person name="Iwayanagi T."/>
            <person name="Wagatsuma M."/>
            <person name="Shiratori A."/>
            <person name="Sudo H."/>
            <person name="Hosoiri T."/>
            <person name="Kaku Y."/>
            <person name="Kodaira H."/>
            <person name="Kondo H."/>
            <person name="Sugawara M."/>
            <person name="Takahashi M."/>
            <person name="Kanda K."/>
            <person name="Yokoi T."/>
            <person name="Furuya T."/>
            <person name="Kikkawa E."/>
            <person name="Omura Y."/>
            <person name="Abe K."/>
            <person name="Kamihara K."/>
            <person name="Katsuta N."/>
            <person name="Sato K."/>
            <person name="Tanikawa M."/>
            <person name="Yamazaki M."/>
            <person name="Ninomiya K."/>
            <person name="Ishibashi T."/>
            <person name="Yamashita H."/>
            <person name="Murakawa K."/>
            <person name="Fujimori K."/>
            <person name="Tanai H."/>
            <person name="Kimata M."/>
            <person name="Watanabe M."/>
            <person name="Hiraoka S."/>
            <person name="Chiba Y."/>
            <person name="Ishida S."/>
            <person name="Ono Y."/>
            <person name="Takiguchi S."/>
            <person name="Watanabe S."/>
            <person name="Yosida M."/>
            <person name="Hotuta T."/>
            <person name="Kusano J."/>
            <person name="Kanehori K."/>
            <person name="Takahashi-Fujii A."/>
            <person name="Hara H."/>
            <person name="Tanase T.-O."/>
            <person name="Nomura Y."/>
            <person name="Togiya S."/>
            <person name="Komai F."/>
            <person name="Hara R."/>
            <person name="Takeuchi K."/>
            <person name="Arita M."/>
            <person name="Imose N."/>
            <person name="Musashino K."/>
            <person name="Yuuki H."/>
            <person name="Oshima A."/>
            <person name="Sasaki N."/>
            <person name="Aotsuka S."/>
            <person name="Yoshikawa Y."/>
            <person name="Matsunawa H."/>
            <person name="Ichihara T."/>
            <person name="Shiohata N."/>
            <person name="Sano S."/>
            <person name="Moriya S."/>
            <person name="Momiyama H."/>
            <person name="Satoh N."/>
            <person name="Takami S."/>
            <person name="Terashima Y."/>
            <person name="Suzuki O."/>
            <person name="Nakagawa S."/>
            <person name="Senoh A."/>
            <person name="Mizoguchi H."/>
            <person name="Goto Y."/>
            <person name="Shimizu F."/>
            <person name="Wakebe H."/>
            <person name="Hishigaki H."/>
            <person name="Watanabe T."/>
            <person name="Sugiyama A."/>
            <person name="Takemoto M."/>
            <person name="Kawakami B."/>
            <person name="Yamazaki M."/>
            <person name="Watanabe K."/>
            <person name="Kumagai A."/>
            <person name="Itakura S."/>
            <person name="Fukuzumi Y."/>
            <person name="Fujimori Y."/>
            <person name="Komiyama M."/>
            <person name="Tashiro H."/>
            <person name="Tanigami A."/>
            <person name="Fujiwara T."/>
            <person name="Ono T."/>
            <person name="Yamada K."/>
            <person name="Fujii Y."/>
            <person name="Ozaki K."/>
            <person name="Hirao M."/>
            <person name="Ohmori Y."/>
            <person name="Kawabata A."/>
            <person name="Hikiji T."/>
            <person name="Kobatake N."/>
            <person name="Inagaki H."/>
            <person name="Ikema Y."/>
            <person name="Okamoto S."/>
            <person name="Okitani R."/>
            <person name="Kawakami T."/>
            <person name="Noguchi S."/>
            <person name="Itoh T."/>
            <person name="Shigeta K."/>
            <person name="Senba T."/>
            <person name="Matsumura K."/>
            <person name="Nakajima Y."/>
            <person name="Mizuno T."/>
            <person name="Morinaga M."/>
            <person name="Sasaki M."/>
            <person name="Togashi T."/>
            <person name="Oyama M."/>
            <person name="Hata H."/>
            <person name="Watanabe M."/>
            <person name="Komatsu T."/>
            <person name="Mizushima-Sugano J."/>
            <person name="Satoh T."/>
            <person name="Shirai Y."/>
            <person name="Takahashi Y."/>
            <person name="Nakagawa K."/>
            <person name="Okumura K."/>
            <person name="Nagase T."/>
            <person name="Nomura N."/>
            <person name="Kikuchi H."/>
            <person name="Masuho Y."/>
            <person name="Yamashita R."/>
            <person name="Nakai K."/>
            <person name="Yada T."/>
            <person name="Nakamura Y."/>
            <person name="Ohara O."/>
            <person name="Isogai T."/>
            <person name="Sugano S."/>
        </authorList>
    </citation>
    <scope>NUCLEOTIDE SEQUENCE [LARGE SCALE MRNA]</scope>
</reference>
<reference key="4">
    <citation type="journal article" date="2004" name="Genome Res.">
        <title>The status, quality, and expansion of the NIH full-length cDNA project: the Mammalian Gene Collection (MGC).</title>
        <authorList>
            <consortium name="The MGC Project Team"/>
        </authorList>
    </citation>
    <scope>NUCLEOTIDE SEQUENCE [LARGE SCALE MRNA]</scope>
    <scope>VARIANT SER-294</scope>
    <source>
        <tissue>Blood</tissue>
        <tissue>Heart</tissue>
        <tissue>Lung</tissue>
    </source>
</reference>
<reference key="5">
    <citation type="journal article" date="2017" name="Sci. Rep.">
        <title>LRRC25 functions as an inhibitor of NF-kappaB signaling pathway by promoting p65/RelA for autophagic degradation.</title>
        <authorList>
            <person name="Feng Y."/>
            <person name="Duan T."/>
            <person name="Du Y."/>
            <person name="Jin S."/>
            <person name="Wang M."/>
            <person name="Cui J."/>
            <person name="Wang R.F."/>
        </authorList>
    </citation>
    <scope>FUNCTION</scope>
    <scope>INTERACTION WITH RELA</scope>
    <scope>SUBCELLULAR LOCATION</scope>
</reference>
<reference key="6">
    <citation type="journal article" date="2018" name="EMBO J.">
        <title>LRRC25 inhibits type I IFN signaling by targeting ISG15-associated RIG-I for autophagic degradation.</title>
        <authorList>
            <person name="Du Y."/>
            <person name="Duan T."/>
            <person name="Feng Y."/>
            <person name="Liu Q."/>
            <person name="Lin M."/>
            <person name="Cui J."/>
            <person name="Wang R.F."/>
        </authorList>
    </citation>
    <scope>FUNCTION</scope>
    <scope>INTERACTION WITH RIGI AND SQSTM1</scope>
    <scope>SUBCELLULAR LOCATION</scope>
</reference>
<name>LRC25_HUMAN</name>
<gene>
    <name type="primary">LRRC25</name>
    <name type="synonym">MAPA</name>
    <name type="ORF">UNQ6169/PRO20174</name>
</gene>
<proteinExistence type="evidence at protein level"/>